<proteinExistence type="evidence at protein level"/>
<organism>
    <name type="scientific">Arabidopsis thaliana</name>
    <name type="common">Mouse-ear cress</name>
    <dbReference type="NCBI Taxonomy" id="3702"/>
    <lineage>
        <taxon>Eukaryota</taxon>
        <taxon>Viridiplantae</taxon>
        <taxon>Streptophyta</taxon>
        <taxon>Embryophyta</taxon>
        <taxon>Tracheophyta</taxon>
        <taxon>Spermatophyta</taxon>
        <taxon>Magnoliopsida</taxon>
        <taxon>eudicotyledons</taxon>
        <taxon>Gunneridae</taxon>
        <taxon>Pentapetalae</taxon>
        <taxon>rosids</taxon>
        <taxon>malvids</taxon>
        <taxon>Brassicales</taxon>
        <taxon>Brassicaceae</taxon>
        <taxon>Camelineae</taxon>
        <taxon>Arabidopsis</taxon>
    </lineage>
</organism>
<gene>
    <name evidence="14" type="primary">EMF1</name>
    <name evidence="16" type="ordered locus">At5g11530</name>
    <name evidence="17" type="ORF">F15N18.120</name>
</gene>
<dbReference type="EMBL" id="AF319968">
    <property type="protein sequence ID" value="AAK98528.1"/>
    <property type="molecule type" value="Genomic_DNA"/>
</dbReference>
<dbReference type="EMBL" id="AL163815">
    <property type="protein sequence ID" value="CAB87713.1"/>
    <property type="molecule type" value="Genomic_DNA"/>
</dbReference>
<dbReference type="EMBL" id="CP002688">
    <property type="protein sequence ID" value="AED91692.1"/>
    <property type="molecule type" value="Genomic_DNA"/>
</dbReference>
<dbReference type="EMBL" id="CP002688">
    <property type="protein sequence ID" value="ANM68488.1"/>
    <property type="molecule type" value="Genomic_DNA"/>
</dbReference>
<dbReference type="EMBL" id="CP002688">
    <property type="protein sequence ID" value="ANM68489.1"/>
    <property type="molecule type" value="Genomic_DNA"/>
</dbReference>
<dbReference type="EMBL" id="EF598316">
    <property type="protein sequence ID" value="ABR08848.1"/>
    <property type="molecule type" value="Genomic_DNA"/>
</dbReference>
<dbReference type="EMBL" id="EF598317">
    <property type="protein sequence ID" value="ABR08849.1"/>
    <property type="molecule type" value="Genomic_DNA"/>
</dbReference>
<dbReference type="EMBL" id="EF598318">
    <property type="protein sequence ID" value="ABR08850.1"/>
    <property type="molecule type" value="Genomic_DNA"/>
</dbReference>
<dbReference type="EMBL" id="EF598319">
    <property type="protein sequence ID" value="ABR08851.1"/>
    <property type="molecule type" value="Genomic_DNA"/>
</dbReference>
<dbReference type="EMBL" id="EF598320">
    <property type="protein sequence ID" value="ABR08852.1"/>
    <property type="molecule type" value="Genomic_DNA"/>
</dbReference>
<dbReference type="EMBL" id="EF598321">
    <property type="protein sequence ID" value="ABR08853.1"/>
    <property type="molecule type" value="Genomic_DNA"/>
</dbReference>
<dbReference type="EMBL" id="EF598322">
    <property type="protein sequence ID" value="ABR08854.1"/>
    <property type="molecule type" value="Genomic_DNA"/>
</dbReference>
<dbReference type="EMBL" id="EF598323">
    <property type="protein sequence ID" value="ABR08855.1"/>
    <property type="molecule type" value="Genomic_DNA"/>
</dbReference>
<dbReference type="EMBL" id="EF598324">
    <property type="protein sequence ID" value="ABR08856.1"/>
    <property type="molecule type" value="Genomic_DNA"/>
</dbReference>
<dbReference type="EMBL" id="EF598325">
    <property type="protein sequence ID" value="ABR08857.1"/>
    <property type="molecule type" value="Genomic_DNA"/>
</dbReference>
<dbReference type="EMBL" id="EF598326">
    <property type="protein sequence ID" value="ABR08858.1"/>
    <property type="molecule type" value="Genomic_DNA"/>
</dbReference>
<dbReference type="EMBL" id="EF598327">
    <property type="protein sequence ID" value="ABR08859.1"/>
    <property type="molecule type" value="Genomic_DNA"/>
</dbReference>
<dbReference type="EMBL" id="EF598328">
    <property type="protein sequence ID" value="ABR08860.1"/>
    <property type="molecule type" value="Genomic_DNA"/>
</dbReference>
<dbReference type="EMBL" id="EF598329">
    <property type="protein sequence ID" value="ABR08861.1"/>
    <property type="molecule type" value="Genomic_DNA"/>
</dbReference>
<dbReference type="EMBL" id="EF598330">
    <property type="protein sequence ID" value="ABR08862.1"/>
    <property type="molecule type" value="Genomic_DNA"/>
</dbReference>
<dbReference type="EMBL" id="EF598331">
    <property type="protein sequence ID" value="ABR08863.1"/>
    <property type="molecule type" value="Genomic_DNA"/>
</dbReference>
<dbReference type="PIR" id="T48512">
    <property type="entry name" value="T48512"/>
</dbReference>
<dbReference type="RefSeq" id="NP_001330242.1">
    <property type="nucleotide sequence ID" value="NM_001343200.1"/>
</dbReference>
<dbReference type="RefSeq" id="NP_001330243.1">
    <property type="nucleotide sequence ID" value="NM_001343201.1"/>
</dbReference>
<dbReference type="RefSeq" id="NP_196714.1">
    <property type="nucleotide sequence ID" value="NM_121191.4"/>
</dbReference>
<dbReference type="BioGRID" id="16303">
    <property type="interactions" value="6"/>
</dbReference>
<dbReference type="FunCoup" id="Q9LYD9">
    <property type="interactions" value="1317"/>
</dbReference>
<dbReference type="STRING" id="3702.Q9LYD9"/>
<dbReference type="GlyGen" id="Q9LYD9">
    <property type="glycosylation" value="1 site"/>
</dbReference>
<dbReference type="PaxDb" id="3702-AT5G11530.1"/>
<dbReference type="ProteomicsDB" id="224422"/>
<dbReference type="EnsemblPlants" id="AT5G11530.1">
    <property type="protein sequence ID" value="AT5G11530.1"/>
    <property type="gene ID" value="AT5G11530"/>
</dbReference>
<dbReference type="EnsemblPlants" id="AT5G11530.2">
    <property type="protein sequence ID" value="AT5G11530.2"/>
    <property type="gene ID" value="AT5G11530"/>
</dbReference>
<dbReference type="EnsemblPlants" id="AT5G11530.3">
    <property type="protein sequence ID" value="AT5G11530.3"/>
    <property type="gene ID" value="AT5G11530"/>
</dbReference>
<dbReference type="GeneID" id="831025"/>
<dbReference type="Gramene" id="AT5G11530.1">
    <property type="protein sequence ID" value="AT5G11530.1"/>
    <property type="gene ID" value="AT5G11530"/>
</dbReference>
<dbReference type="Gramene" id="AT5G11530.2">
    <property type="protein sequence ID" value="AT5G11530.2"/>
    <property type="gene ID" value="AT5G11530"/>
</dbReference>
<dbReference type="Gramene" id="AT5G11530.3">
    <property type="protein sequence ID" value="AT5G11530.3"/>
    <property type="gene ID" value="AT5G11530"/>
</dbReference>
<dbReference type="KEGG" id="ath:AT5G11530"/>
<dbReference type="Araport" id="AT5G11530"/>
<dbReference type="TAIR" id="AT5G11530">
    <property type="gene designation" value="EMF1"/>
</dbReference>
<dbReference type="eggNOG" id="ENOG502RBJ9">
    <property type="taxonomic scope" value="Eukaryota"/>
</dbReference>
<dbReference type="HOGENOM" id="CLU_283919_0_0_1"/>
<dbReference type="InParanoid" id="Q9LYD9"/>
<dbReference type="OMA" id="LDECDYA"/>
<dbReference type="OrthoDB" id="754229at2759"/>
<dbReference type="PhylomeDB" id="Q9LYD9"/>
<dbReference type="PRO" id="PR:Q9LYD9"/>
<dbReference type="Proteomes" id="UP000006548">
    <property type="component" value="Chromosome 5"/>
</dbReference>
<dbReference type="ExpressionAtlas" id="Q9LYD9">
    <property type="expression patterns" value="baseline and differential"/>
</dbReference>
<dbReference type="GO" id="GO:0005634">
    <property type="term" value="C:nucleus"/>
    <property type="evidence" value="ECO:0000314"/>
    <property type="project" value="TAIR"/>
</dbReference>
<dbReference type="GO" id="GO:0003690">
    <property type="term" value="F:double-stranded DNA binding"/>
    <property type="evidence" value="ECO:0000314"/>
    <property type="project" value="UniProtKB"/>
</dbReference>
<dbReference type="GO" id="GO:0003723">
    <property type="term" value="F:RNA binding"/>
    <property type="evidence" value="ECO:0000314"/>
    <property type="project" value="UniProtKB"/>
</dbReference>
<dbReference type="GO" id="GO:0003697">
    <property type="term" value="F:single-stranded DNA binding"/>
    <property type="evidence" value="ECO:0000314"/>
    <property type="project" value="UniProtKB"/>
</dbReference>
<dbReference type="GO" id="GO:0040029">
    <property type="term" value="P:epigenetic regulation of gene expression"/>
    <property type="evidence" value="ECO:0000315"/>
    <property type="project" value="UniProtKB"/>
</dbReference>
<dbReference type="GO" id="GO:0042538">
    <property type="term" value="P:hyperosmotic salinity response"/>
    <property type="evidence" value="ECO:0000315"/>
    <property type="project" value="TAIR"/>
</dbReference>
<dbReference type="GO" id="GO:0010022">
    <property type="term" value="P:meristem determinacy"/>
    <property type="evidence" value="ECO:0000315"/>
    <property type="project" value="TAIR"/>
</dbReference>
<dbReference type="GO" id="GO:0045892">
    <property type="term" value="P:negative regulation of DNA-templated transcription"/>
    <property type="evidence" value="ECO:0000314"/>
    <property type="project" value="UniProtKB"/>
</dbReference>
<dbReference type="GO" id="GO:0009910">
    <property type="term" value="P:negative regulation of flower development"/>
    <property type="evidence" value="ECO:0000315"/>
    <property type="project" value="TAIR"/>
</dbReference>
<dbReference type="GO" id="GO:0045814">
    <property type="term" value="P:negative regulation of gene expression, epigenetic"/>
    <property type="evidence" value="ECO:0000315"/>
    <property type="project" value="UniProtKB"/>
</dbReference>
<dbReference type="GO" id="GO:0009791">
    <property type="term" value="P:post-embryonic development"/>
    <property type="evidence" value="ECO:0000270"/>
    <property type="project" value="TAIR"/>
</dbReference>
<dbReference type="GO" id="GO:0009909">
    <property type="term" value="P:regulation of flower development"/>
    <property type="evidence" value="ECO:0000315"/>
    <property type="project" value="UniProtKB"/>
</dbReference>
<dbReference type="GO" id="GO:1901000">
    <property type="term" value="P:regulation of response to salt stress"/>
    <property type="evidence" value="ECO:0000315"/>
    <property type="project" value="UniProtKB"/>
</dbReference>
<dbReference type="GO" id="GO:0048367">
    <property type="term" value="P:shoot system development"/>
    <property type="evidence" value="ECO:0000315"/>
    <property type="project" value="TAIR"/>
</dbReference>
<dbReference type="InterPro" id="IPR034583">
    <property type="entry name" value="EMF1"/>
</dbReference>
<dbReference type="PANTHER" id="PTHR35504">
    <property type="entry name" value="PROTEIN EMBRYONIC FLOWER 1"/>
    <property type="match status" value="1"/>
</dbReference>
<dbReference type="PANTHER" id="PTHR35504:SF1">
    <property type="entry name" value="PROTEIN EMBRYONIC FLOWER 1"/>
    <property type="match status" value="1"/>
</dbReference>
<keyword id="KW-0238">DNA-binding</keyword>
<keyword id="KW-0539">Nucleus</keyword>
<keyword id="KW-1185">Reference proteome</keyword>
<keyword id="KW-0677">Repeat</keyword>
<keyword id="KW-0678">Repressor</keyword>
<keyword id="KW-0694">RNA-binding</keyword>
<feature type="chain" id="PRO_0000405409" description="Protein EMBRYONIC FLOWER 1">
    <location>
        <begin position="1"/>
        <end position="1096"/>
    </location>
</feature>
<feature type="region of interest" description="Disordered" evidence="2">
    <location>
        <begin position="155"/>
        <end position="189"/>
    </location>
</feature>
<feature type="region of interest" description="Disordered" evidence="2">
    <location>
        <begin position="274"/>
        <end position="296"/>
    </location>
</feature>
<feature type="region of interest" description="Disordered" evidence="2">
    <location>
        <begin position="315"/>
        <end position="348"/>
    </location>
</feature>
<feature type="region of interest" description="DNA-binding" evidence="15">
    <location>
        <begin position="337"/>
        <end position="617"/>
    </location>
</feature>
<feature type="region of interest" description="Disordered" evidence="2">
    <location>
        <begin position="366"/>
        <end position="420"/>
    </location>
</feature>
<feature type="region of interest" description="Disordered" evidence="2">
    <location>
        <begin position="563"/>
        <end position="612"/>
    </location>
</feature>
<feature type="region of interest" description="Disordered" evidence="2">
    <location>
        <begin position="629"/>
        <end position="651"/>
    </location>
</feature>
<feature type="region of interest" description="DNA-binding" evidence="15">
    <location>
        <begin position="866"/>
        <end position="1096"/>
    </location>
</feature>
<feature type="region of interest" description="Disordered" evidence="2">
    <location>
        <begin position="1007"/>
        <end position="1032"/>
    </location>
</feature>
<feature type="region of interest" description="Disordered" evidence="2">
    <location>
        <begin position="1070"/>
        <end position="1096"/>
    </location>
</feature>
<feature type="short sequence motif" description="Nuclear localization signal 1" evidence="1">
    <location>
        <begin position="170"/>
        <end position="177"/>
    </location>
</feature>
<feature type="short sequence motif" description="Nuclear localization signal 2" evidence="1">
    <location>
        <begin position="281"/>
        <end position="288"/>
    </location>
</feature>
<feature type="short sequence motif" description="Nuclear localization signal 3" evidence="1">
    <location>
        <begin position="1071"/>
        <end position="1078"/>
    </location>
</feature>
<feature type="compositionally biased region" description="Basic and acidic residues" evidence="2">
    <location>
        <begin position="281"/>
        <end position="294"/>
    </location>
</feature>
<feature type="compositionally biased region" description="Polar residues" evidence="2">
    <location>
        <begin position="315"/>
        <end position="337"/>
    </location>
</feature>
<feature type="compositionally biased region" description="Basic and acidic residues" evidence="2">
    <location>
        <begin position="371"/>
        <end position="381"/>
    </location>
</feature>
<feature type="compositionally biased region" description="Polar residues" evidence="2">
    <location>
        <begin position="382"/>
        <end position="394"/>
    </location>
</feature>
<feature type="compositionally biased region" description="Basic and acidic residues" evidence="2">
    <location>
        <begin position="572"/>
        <end position="601"/>
    </location>
</feature>
<feature type="compositionally biased region" description="Polar residues" evidence="2">
    <location>
        <begin position="1018"/>
        <end position="1032"/>
    </location>
</feature>
<name>EMF1_ARATH</name>
<protein>
    <recommendedName>
        <fullName evidence="14">Protein EMBRYONIC FLOWER 1</fullName>
    </recommendedName>
</protein>
<comment type="function">
    <text evidence="3 4 5 6 7 8 9 10 11 12 13">Transcription repressor that regulates phase transition during shoot, flower and seeds development. Controls leaves development, shoot architecture and flowering by delaying both the vegetative to reproductive transition and flower initiation. Participates in polycomb group (PcG) protein complex-mediated (including EMF2) silencing of the flower homeotic genes AGAMOUS (AG), PISTILLATA (PI), and APETALA3 (AP3), as well as of some regulatory genes such as ABSCISIC ACID INSENSITIVE3 (ABI3), LONG VEGETATIVE PHASE1 (LOV1), and FLOWERING LOCUS C (FLC) during vegetative development. Required for histone methylation or for maintaining a stable histone methylation (e.g. H3K27me3) pattern of repressed target genes (including genes involved in salt stress response and flower development); this repression is counteracted by ULT1 (PubMed:23632855). Can bind non specifically DNA (both double- and single-stranded) and RNA.</text>
</comment>
<comment type="subunit">
    <text evidence="6">Interacts with MSI1.</text>
</comment>
<comment type="subcellular location">
    <subcellularLocation>
        <location evidence="1 6">Nucleus</location>
    </subcellularLocation>
    <text evidence="6">Follow a speckle-like pattern.</text>
</comment>
<comment type="tissue specificity">
    <text evidence="4 8">Expressed in mature embryo, root tips, cotyledons, leaves, stems, shoot apex, and flower clusters, with highest levels in flowers. The presence in the shoot apical meristem (SAM) is required to maintain vegetative development and prevent early flowering.</text>
</comment>
<comment type="developmental stage">
    <text evidence="8">After flowering, expressed in the stigma and anthers.</text>
</comment>
<comment type="disruption phenotype">
    <text evidence="3 4 5 7 9 10 11 12 13">Abolished rosette shoot development, reduced inflorescence with several flowers lacking petals, and differentiation of the apical meristem from indeterminate to determinate growth by producing a single terminal flower on all nodes. Altered inflorescence-to-flower transition. Degenerated flowers with only carpelloid structures capped with stigmatic papillae but lacking leaves, petals and stamen. Derepressed seed development program. Decreased H3K27me3 marks but increased H3K4me3 marks on target gene loci (PubMed:23632855). Plants missing both EMF1 and ULT1 have rescued normal H3K27me3 marks and H3K4me3 marks (PubMed:23632855).</text>
</comment>
<sequence>MGSSIKINSISIDLAGAANEIDMVKCDHFSMRGFVAETRERDLRKCWPFSEESVSLVDQQSYTLPTLSVPKFRWWHCMSCIKDIDAHGPKDCGLHSNSKAIGNSSVIESKSKFNSLTIIDHEKEKKTDIADNAIEEKVGVNCENDDQTATTFLKKARGRPMGASNVRSKSRKLVSPEQVGNNRSKEKLNKPSMDISSWKEKQNVDQAVTTFGSSEIAGVVEDTPPKATKNHKGIRGLMECDNGSSESINLAMSGLQRRKSRKVRLLSELLGNTKTSGGSNIRKEESALKKESVRGRKRKLLPENNYVSRILSTMGATSENASKSCDSDQGNSESTDSGFDRTPFKGKQRNRRFQVVDEFVPSLPCETSQEGIKEHDADPSKRSTPAHSLFTGNDSVPCPPGTQRTERKLSLPKKKTKKPVIDNGKSTVISFSNGIDGSQVNSHTGPSMNTVSQTRDLLNGKRVGGLFDNRLASDGYFRKYLSQVNDKPITSLHLQDNDYVRSRDAEPNCLRDFSSSSKSSSGGWLRTGVDIVDFRNNNHNTNRSSFSNLKLRYPPSSTEVADLSRVLQKDASGADRKGKTVMVQEHHGAPRSQSHDRKETTTEEQNNDDIPMEIVELMAKNQYERCLPDKEEDVSNKQPSQETAHKSKNALLIDLNETYDNGISLEDNNTSRPPKPCSSNARREEHFPMGRQQNSHDFFPISQPYVPSPFGIFPPTQENRASSIRFSGHNCQWLGNLPTVGNQNPSPSSFRVLRACDTCQSVPNQYREASHPIWPSSMIPPQSQYKPVSLNINQSTNPGTLSQASNNENTWNLNFVAANGKQKCGPNPEFSFGCKHAAGVSSSSSRPIDNFSSESSIPALHLLSLLDPRLRSTTPADQHGNTKFTKRHFPPANQSKEFIELQTGDSSKSAYSTKQIPFDLYSKRFTQEPSRKSFPITPPIGTSSLSFQNASWSPHHQEKKTKRKDTFAPVYNTHEKPVFASSNDQAKFQLLGASNSMMLPLKFHMTDKEKKQKRKAESCNNNASAGPVKNSSGPIVCSVNRNPADFTIPEPGNVYMLTGEHLKVRKRTTFKKKPAVCKQDAMKQTKKPVCPPTQNA</sequence>
<evidence type="ECO:0000255" key="1">
    <source>
        <dbReference type="PROSITE-ProRule" id="PRU00768"/>
    </source>
</evidence>
<evidence type="ECO:0000256" key="2">
    <source>
        <dbReference type="SAM" id="MobiDB-lite"/>
    </source>
</evidence>
<evidence type="ECO:0000269" key="3">
    <source>
    </source>
</evidence>
<evidence type="ECO:0000269" key="4">
    <source>
    </source>
</evidence>
<evidence type="ECO:0000269" key="5">
    <source>
    </source>
</evidence>
<evidence type="ECO:0000269" key="6">
    <source>
    </source>
</evidence>
<evidence type="ECO:0000269" key="7">
    <source>
    </source>
</evidence>
<evidence type="ECO:0000269" key="8">
    <source>
    </source>
</evidence>
<evidence type="ECO:0000269" key="9">
    <source>
    </source>
</evidence>
<evidence type="ECO:0000269" key="10">
    <source>
    </source>
</evidence>
<evidence type="ECO:0000269" key="11">
    <source>
    </source>
</evidence>
<evidence type="ECO:0000269" key="12">
    <source>
    </source>
</evidence>
<evidence type="ECO:0000269" key="13">
    <source>
    </source>
</evidence>
<evidence type="ECO:0000303" key="14">
    <source>
    </source>
</evidence>
<evidence type="ECO:0000305" key="15">
    <source>
    </source>
</evidence>
<evidence type="ECO:0000312" key="16">
    <source>
        <dbReference type="Araport" id="AT5G11530"/>
    </source>
</evidence>
<evidence type="ECO:0000312" key="17">
    <source>
        <dbReference type="EMBL" id="CAB87713.1"/>
    </source>
</evidence>
<accession>Q9LYD9</accession>
<accession>A5YY84</accession>
<reference key="1">
    <citation type="journal article" date="2001" name="Plant Cell">
        <title>EMF1, a novel protein involved in the control of shoot architecture and flowering in Arabidopsis.</title>
        <authorList>
            <person name="Aubert D."/>
            <person name="Chen L."/>
            <person name="Moon Y.-H."/>
            <person name="Martin D."/>
            <person name="Castle L.A."/>
            <person name="Yang C.-H."/>
            <person name="Sung Z.R."/>
        </authorList>
    </citation>
    <scope>NUCLEOTIDE SEQUENCE [GENOMIC DNA]</scope>
    <scope>FUNCTION</scope>
    <scope>DISRUPTION PHENOTYPE</scope>
    <scope>TISSUE SPECIFICITY</scope>
</reference>
<reference key="2">
    <citation type="journal article" date="2000" name="Nature">
        <title>Sequence and analysis of chromosome 5 of the plant Arabidopsis thaliana.</title>
        <authorList>
            <person name="Tabata S."/>
            <person name="Kaneko T."/>
            <person name="Nakamura Y."/>
            <person name="Kotani H."/>
            <person name="Kato T."/>
            <person name="Asamizu E."/>
            <person name="Miyajima N."/>
            <person name="Sasamoto S."/>
            <person name="Kimura T."/>
            <person name="Hosouchi T."/>
            <person name="Kawashima K."/>
            <person name="Kohara M."/>
            <person name="Matsumoto M."/>
            <person name="Matsuno A."/>
            <person name="Muraki A."/>
            <person name="Nakayama S."/>
            <person name="Nakazaki N."/>
            <person name="Naruo K."/>
            <person name="Okumura S."/>
            <person name="Shinpo S."/>
            <person name="Takeuchi C."/>
            <person name="Wada T."/>
            <person name="Watanabe A."/>
            <person name="Yamada M."/>
            <person name="Yasuda M."/>
            <person name="Sato S."/>
            <person name="de la Bastide M."/>
            <person name="Huang E."/>
            <person name="Spiegel L."/>
            <person name="Gnoj L."/>
            <person name="O'Shaughnessy A."/>
            <person name="Preston R."/>
            <person name="Habermann K."/>
            <person name="Murray J."/>
            <person name="Johnson D."/>
            <person name="Rohlfing T."/>
            <person name="Nelson J."/>
            <person name="Stoneking T."/>
            <person name="Pepin K."/>
            <person name="Spieth J."/>
            <person name="Sekhon M."/>
            <person name="Armstrong J."/>
            <person name="Becker M."/>
            <person name="Belter E."/>
            <person name="Cordum H."/>
            <person name="Cordes M."/>
            <person name="Courtney L."/>
            <person name="Courtney W."/>
            <person name="Dante M."/>
            <person name="Du H."/>
            <person name="Edwards J."/>
            <person name="Fryman J."/>
            <person name="Haakensen B."/>
            <person name="Lamar E."/>
            <person name="Latreille P."/>
            <person name="Leonard S."/>
            <person name="Meyer R."/>
            <person name="Mulvaney E."/>
            <person name="Ozersky P."/>
            <person name="Riley A."/>
            <person name="Strowmatt C."/>
            <person name="Wagner-McPherson C."/>
            <person name="Wollam A."/>
            <person name="Yoakum M."/>
            <person name="Bell M."/>
            <person name="Dedhia N."/>
            <person name="Parnell L."/>
            <person name="Shah R."/>
            <person name="Rodriguez M."/>
            <person name="Hoon See L."/>
            <person name="Vil D."/>
            <person name="Baker J."/>
            <person name="Kirchoff K."/>
            <person name="Toth K."/>
            <person name="King L."/>
            <person name="Bahret A."/>
            <person name="Miller B."/>
            <person name="Marra M.A."/>
            <person name="Martienssen R."/>
            <person name="McCombie W.R."/>
            <person name="Wilson R.K."/>
            <person name="Murphy G."/>
            <person name="Bancroft I."/>
            <person name="Volckaert G."/>
            <person name="Wambutt R."/>
            <person name="Duesterhoeft A."/>
            <person name="Stiekema W."/>
            <person name="Pohl T."/>
            <person name="Entian K.-D."/>
            <person name="Terryn N."/>
            <person name="Hartley N."/>
            <person name="Bent E."/>
            <person name="Johnson S."/>
            <person name="Langham S.-A."/>
            <person name="McCullagh B."/>
            <person name="Robben J."/>
            <person name="Grymonprez B."/>
            <person name="Zimmermann W."/>
            <person name="Ramsperger U."/>
            <person name="Wedler H."/>
            <person name="Balke K."/>
            <person name="Wedler E."/>
            <person name="Peters S."/>
            <person name="van Staveren M."/>
            <person name="Dirkse W."/>
            <person name="Mooijman P."/>
            <person name="Klein Lankhorst R."/>
            <person name="Weitzenegger T."/>
            <person name="Bothe G."/>
            <person name="Rose M."/>
            <person name="Hauf J."/>
            <person name="Berneiser S."/>
            <person name="Hempel S."/>
            <person name="Feldpausch M."/>
            <person name="Lamberth S."/>
            <person name="Villarroel R."/>
            <person name="Gielen J."/>
            <person name="Ardiles W."/>
            <person name="Bents O."/>
            <person name="Lemcke K."/>
            <person name="Kolesov G."/>
            <person name="Mayer K.F.X."/>
            <person name="Rudd S."/>
            <person name="Schoof H."/>
            <person name="Schueller C."/>
            <person name="Zaccaria P."/>
            <person name="Mewes H.-W."/>
            <person name="Bevan M."/>
            <person name="Fransz P.F."/>
        </authorList>
    </citation>
    <scope>NUCLEOTIDE SEQUENCE [LARGE SCALE GENOMIC DNA]</scope>
    <source>
        <strain>cv. Columbia</strain>
    </source>
</reference>
<reference key="3">
    <citation type="journal article" date="2017" name="Plant J.">
        <title>Araport11: a complete reannotation of the Arabidopsis thaliana reference genome.</title>
        <authorList>
            <person name="Cheng C.Y."/>
            <person name="Krishnakumar V."/>
            <person name="Chan A.P."/>
            <person name="Thibaud-Nissen F."/>
            <person name="Schobel S."/>
            <person name="Town C.D."/>
        </authorList>
    </citation>
    <scope>GENOME REANNOTATION</scope>
    <source>
        <strain>cv. Columbia</strain>
    </source>
</reference>
<reference key="4">
    <citation type="journal article" date="1995" name="Dev. Biol.">
        <title>Genetic regulation of shoot development in Arabidopsis: role of the EMF genes.</title>
        <authorList>
            <person name="Yang C.-H."/>
            <person name="Chen L.-J."/>
            <person name="Sung Z.R."/>
        </authorList>
    </citation>
    <scope>FUNCTION</scope>
    <scope>DISRUPTION PHENOTYPE</scope>
    <source>
        <strain>cv. Columbia</strain>
    </source>
</reference>
<reference key="5">
    <citation type="journal article" date="1997" name="Plant Cell">
        <title>EMF genes regulate Arabidopsis inflorescence development.</title>
        <authorList>
            <person name="Chen L."/>
            <person name="Cheng J.C."/>
            <person name="Castle L."/>
            <person name="Sung Z.R."/>
        </authorList>
    </citation>
    <scope>FUNCTION</scope>
    <scope>DISRUPTION PHENOTYPE</scope>
</reference>
<reference key="6">
    <citation type="journal article" date="1998" name="Plant Cell Physiol.">
        <title>EMF genes interact with late-flowering genes to regulate Arabidopsis shoot development.</title>
        <authorList>
            <person name="Haung M.-D."/>
            <person name="Yang C.-H."/>
        </authorList>
    </citation>
    <scope>FUNCTION</scope>
    <scope>DISRUPTION PHENOTYPE</scope>
</reference>
<reference key="7">
    <citation type="journal article" date="1998" name="Plant J.">
        <title>FLD interacts with genes that affect different developmental phase transitions to regulate Arabidopsis shoot development.</title>
        <authorList>
            <person name="Chou M.L."/>
            <person name="Yang C.-H."/>
        </authorList>
    </citation>
    <scope>FUNCTION</scope>
    <scope>DISRUPTION PHENOTYPE</scope>
</reference>
<reference key="8">
    <citation type="journal article" date="1999" name="Plant J.">
        <title>Genetic interactions of the Arabidopsis flowering time gene FCA, with genes regulating floral initiation.</title>
        <authorList>
            <person name="Page T."/>
            <person name="Macknight R."/>
            <person name="Yang C.-H."/>
            <person name="Dean C."/>
        </authorList>
    </citation>
    <scope>FUNCTION</scope>
    <scope>DISRUPTION PHENOTYPE</scope>
</reference>
<reference key="9">
    <citation type="journal article" date="2003" name="Plant Cell">
        <title>EMF genes maintain vegetative development by repressing the flower program in Arabidopsis.</title>
        <authorList>
            <person name="Moon Y.-H."/>
            <person name="Chen L."/>
            <person name="Pan R.L."/>
            <person name="Chang H.-S."/>
            <person name="Zhu T."/>
            <person name="Maffeo D.M."/>
            <person name="Sung Z.R."/>
        </authorList>
    </citation>
    <scope>FUNCTION</scope>
    <scope>DISRUPTION PHENOTYPE</scope>
</reference>
<reference key="10">
    <citation type="journal article" date="2008" name="Plant Cell">
        <title>EMBRYONIC FLOWER1 participates in polycomb group-mediated AG gene silencing in Arabidopsis.</title>
        <authorList>
            <person name="Calonje M."/>
            <person name="Sanchez R."/>
            <person name="Chen L."/>
            <person name="Sung Z.R."/>
        </authorList>
    </citation>
    <scope>FUNCTION</scope>
    <scope>INTERACTION WITH MSI1</scope>
    <scope>SUBCELLULAR LOCATION</scope>
</reference>
<reference key="11">
    <citation type="journal article" date="2009" name="Mol. Plant">
        <title>Temporal and spatial requirement of EMF1 activity for Arabidopsis vegetative and reproductive development.</title>
        <authorList>
            <person name="Sanchez R."/>
            <person name="Kim M.Y."/>
            <person name="Calonje M."/>
            <person name="Moon Y.-H."/>
            <person name="Sung Z.R."/>
        </authorList>
    </citation>
    <scope>FUNCTION</scope>
    <scope>TISSUE SPECIFICITY</scope>
    <scope>DEVELOPMENTAL STAGE</scope>
</reference>
<reference key="12">
    <citation type="journal article" date="2010" name="Plant Physiol.">
        <title>Epigenetic regulation of gene programs by EMF1 and EMF2 in Arabidopsis.</title>
        <authorList>
            <person name="Kim S.Y."/>
            <person name="Zhu T."/>
            <person name="Sung Z.R."/>
        </authorList>
    </citation>
    <scope>FUNCTION</scope>
    <scope>DISRUPTION PHENOTYPE</scope>
</reference>
<reference key="13">
    <citation type="journal article" date="2013" name="Plant Physiol.">
        <title>EMBRYONIC FLOWER1 and ULTRAPETALA1 Act Antagonistically on Arabidopsis Development and Stress Response.</title>
        <authorList>
            <person name="Pu L."/>
            <person name="Liu M.-S."/>
            <person name="Kim S.Y."/>
            <person name="Chen L.-F.O."/>
            <person name="Fletcher J.C."/>
            <person name="Sung Z.R."/>
        </authorList>
    </citation>
    <scope>FUNCTION</scope>
    <scope>DISRUPTION PHENOTYPE</scope>
    <source>
        <strain>cv. Columbia</strain>
    </source>
</reference>